<keyword id="KW-0997">Cell inner membrane</keyword>
<keyword id="KW-1003">Cell membrane</keyword>
<keyword id="KW-0378">Hydrolase</keyword>
<keyword id="KW-0472">Membrane</keyword>
<keyword id="KW-0812">Transmembrane</keyword>
<keyword id="KW-1133">Transmembrane helix</keyword>
<reference key="1">
    <citation type="submission" date="2007-09" db="EMBL/GenBank/DDBJ databases">
        <title>Complete genome sequence of Rickettsia canadensis.</title>
        <authorList>
            <person name="Madan A."/>
            <person name="Fahey J."/>
            <person name="Helton E."/>
            <person name="Ketteman M."/>
            <person name="Madan A."/>
            <person name="Rodrigues S."/>
            <person name="Sanchez A."/>
            <person name="Whiting M."/>
            <person name="Dasch G."/>
            <person name="Eremeeva M."/>
        </authorList>
    </citation>
    <scope>NUCLEOTIDE SEQUENCE [LARGE SCALE GENOMIC DNA]</scope>
    <source>
        <strain>McKiel</strain>
    </source>
</reference>
<accession>A8EXI2</accession>
<proteinExistence type="inferred from homology"/>
<feature type="chain" id="PRO_0000316274" description="Signal peptidase I">
    <location>
        <begin position="1"/>
        <end position="265"/>
    </location>
</feature>
<feature type="topological domain" description="Cytoplasmic" evidence="2">
    <location>
        <begin position="1"/>
        <end position="19"/>
    </location>
</feature>
<feature type="transmembrane region" description="Helical" evidence="2">
    <location>
        <begin position="20"/>
        <end position="40"/>
    </location>
</feature>
<feature type="topological domain" description="Periplasmic" evidence="2">
    <location>
        <begin position="41"/>
        <end position="265"/>
    </location>
</feature>
<feature type="active site" evidence="1">
    <location>
        <position position="44"/>
    </location>
</feature>
<feature type="active site" evidence="1">
    <location>
        <position position="107"/>
    </location>
</feature>
<dbReference type="EC" id="3.4.21.89"/>
<dbReference type="EMBL" id="CP000409">
    <property type="protein sequence ID" value="ABV73065.1"/>
    <property type="molecule type" value="Genomic_DNA"/>
</dbReference>
<dbReference type="RefSeq" id="WP_012148266.1">
    <property type="nucleotide sequence ID" value="NC_009879.1"/>
</dbReference>
<dbReference type="SMR" id="A8EXI2"/>
<dbReference type="STRING" id="293613.A1E_00585"/>
<dbReference type="MEROPS" id="S26.001"/>
<dbReference type="KEGG" id="rcm:A1E_00585"/>
<dbReference type="eggNOG" id="COG0681">
    <property type="taxonomic scope" value="Bacteria"/>
</dbReference>
<dbReference type="HOGENOM" id="CLU_028723_1_2_5"/>
<dbReference type="Proteomes" id="UP000007056">
    <property type="component" value="Chromosome"/>
</dbReference>
<dbReference type="GO" id="GO:0005886">
    <property type="term" value="C:plasma membrane"/>
    <property type="evidence" value="ECO:0007669"/>
    <property type="project" value="UniProtKB-SubCell"/>
</dbReference>
<dbReference type="GO" id="GO:0004252">
    <property type="term" value="F:serine-type endopeptidase activity"/>
    <property type="evidence" value="ECO:0007669"/>
    <property type="project" value="UniProtKB-EC"/>
</dbReference>
<dbReference type="GO" id="GO:0006465">
    <property type="term" value="P:signal peptide processing"/>
    <property type="evidence" value="ECO:0007669"/>
    <property type="project" value="InterPro"/>
</dbReference>
<dbReference type="CDD" id="cd06530">
    <property type="entry name" value="S26_SPase_I"/>
    <property type="match status" value="1"/>
</dbReference>
<dbReference type="Gene3D" id="2.10.109.10">
    <property type="entry name" value="Umud Fragment, subunit A"/>
    <property type="match status" value="1"/>
</dbReference>
<dbReference type="InterPro" id="IPR036286">
    <property type="entry name" value="LexA/Signal_pep-like_sf"/>
</dbReference>
<dbReference type="InterPro" id="IPR000223">
    <property type="entry name" value="Pept_S26A_signal_pept_1"/>
</dbReference>
<dbReference type="InterPro" id="IPR019758">
    <property type="entry name" value="Pept_S26A_signal_pept_1_CS"/>
</dbReference>
<dbReference type="InterPro" id="IPR019757">
    <property type="entry name" value="Pept_S26A_signal_pept_1_Lys-AS"/>
</dbReference>
<dbReference type="InterPro" id="IPR019533">
    <property type="entry name" value="Peptidase_S26"/>
</dbReference>
<dbReference type="NCBIfam" id="TIGR02227">
    <property type="entry name" value="sigpep_I_bact"/>
    <property type="match status" value="1"/>
</dbReference>
<dbReference type="PANTHER" id="PTHR43390:SF1">
    <property type="entry name" value="CHLOROPLAST PROCESSING PEPTIDASE"/>
    <property type="match status" value="1"/>
</dbReference>
<dbReference type="PANTHER" id="PTHR43390">
    <property type="entry name" value="SIGNAL PEPTIDASE I"/>
    <property type="match status" value="1"/>
</dbReference>
<dbReference type="Pfam" id="PF10502">
    <property type="entry name" value="Peptidase_S26"/>
    <property type="match status" value="1"/>
</dbReference>
<dbReference type="PRINTS" id="PR00727">
    <property type="entry name" value="LEADERPTASE"/>
</dbReference>
<dbReference type="SUPFAM" id="SSF51306">
    <property type="entry name" value="LexA/Signal peptidase"/>
    <property type="match status" value="1"/>
</dbReference>
<dbReference type="PROSITE" id="PS00760">
    <property type="entry name" value="SPASE_I_2"/>
    <property type="match status" value="1"/>
</dbReference>
<dbReference type="PROSITE" id="PS00761">
    <property type="entry name" value="SPASE_I_3"/>
    <property type="match status" value="1"/>
</dbReference>
<gene>
    <name type="primary">lepB</name>
    <name type="ordered locus">A1E_00585</name>
</gene>
<organism>
    <name type="scientific">Rickettsia canadensis (strain McKiel)</name>
    <dbReference type="NCBI Taxonomy" id="293613"/>
    <lineage>
        <taxon>Bacteria</taxon>
        <taxon>Pseudomonadati</taxon>
        <taxon>Pseudomonadota</taxon>
        <taxon>Alphaproteobacteria</taxon>
        <taxon>Rickettsiales</taxon>
        <taxon>Rickettsiaceae</taxon>
        <taxon>Rickettsieae</taxon>
        <taxon>Rickettsia</taxon>
        <taxon>belli group</taxon>
    </lineage>
</organism>
<sequence>MQIDTKTNTNKTTAQEWKSFAFVVCIALLIRILIMEPFTVPTGSMKATILENDYIFSTKYSYGYSNYSLSFFDFIPLFKGRIFACEPERGDIVVFRPPNDMSVRYIKRLIGLPGDKIQLIDDIIYINDKKIERTEVGTYISEEGRKYLKFKETLPNGRTYFSYKLAPIFGVISDDRYGNTDVFYVPEGKYFFLGDNRDQSNDSRVNLGFVPFENFIAKAQFIWFSTKITWWDNDIGVINLILKLKPWIESVRLNRIFRNLYNTDE</sequence>
<name>LEP_RICCK</name>
<protein>
    <recommendedName>
        <fullName>Signal peptidase I</fullName>
        <shortName>SPase I</shortName>
        <ecNumber>3.4.21.89</ecNumber>
    </recommendedName>
    <alternativeName>
        <fullName>Leader peptidase I</fullName>
    </alternativeName>
</protein>
<comment type="catalytic activity">
    <reaction>
        <text>Cleavage of hydrophobic, N-terminal signal or leader sequences from secreted and periplasmic proteins.</text>
        <dbReference type="EC" id="3.4.21.89"/>
    </reaction>
</comment>
<comment type="subcellular location">
    <subcellularLocation>
        <location evidence="3">Cell inner membrane</location>
        <topology evidence="3">Single-pass type II membrane protein</topology>
    </subcellularLocation>
</comment>
<comment type="similarity">
    <text evidence="3">Belongs to the peptidase S26 family.</text>
</comment>
<evidence type="ECO:0000250" key="1"/>
<evidence type="ECO:0000255" key="2"/>
<evidence type="ECO:0000305" key="3"/>